<organism>
    <name type="scientific">Campylobacter jejuni (strain RM1221)</name>
    <dbReference type="NCBI Taxonomy" id="195099"/>
    <lineage>
        <taxon>Bacteria</taxon>
        <taxon>Pseudomonadati</taxon>
        <taxon>Campylobacterota</taxon>
        <taxon>Epsilonproteobacteria</taxon>
        <taxon>Campylobacterales</taxon>
        <taxon>Campylobacteraceae</taxon>
        <taxon>Campylobacter</taxon>
    </lineage>
</organism>
<feature type="chain" id="PRO_0000167434" description="Ribosome-recycling factor">
    <location>
        <begin position="1"/>
        <end position="185"/>
    </location>
</feature>
<gene>
    <name evidence="1" type="primary">frr</name>
    <name type="ordered locus">CJE0285</name>
</gene>
<dbReference type="EMBL" id="CP000025">
    <property type="protein sequence ID" value="AAW34877.1"/>
    <property type="molecule type" value="Genomic_DNA"/>
</dbReference>
<dbReference type="SMR" id="Q5HWM8"/>
<dbReference type="KEGG" id="cjr:CJE0285"/>
<dbReference type="HOGENOM" id="CLU_073981_2_0_7"/>
<dbReference type="GO" id="GO:0005829">
    <property type="term" value="C:cytosol"/>
    <property type="evidence" value="ECO:0007669"/>
    <property type="project" value="GOC"/>
</dbReference>
<dbReference type="GO" id="GO:0043023">
    <property type="term" value="F:ribosomal large subunit binding"/>
    <property type="evidence" value="ECO:0007669"/>
    <property type="project" value="TreeGrafter"/>
</dbReference>
<dbReference type="GO" id="GO:0002184">
    <property type="term" value="P:cytoplasmic translational termination"/>
    <property type="evidence" value="ECO:0007669"/>
    <property type="project" value="TreeGrafter"/>
</dbReference>
<dbReference type="CDD" id="cd00520">
    <property type="entry name" value="RRF"/>
    <property type="match status" value="1"/>
</dbReference>
<dbReference type="FunFam" id="1.10.132.20:FF:000001">
    <property type="entry name" value="Ribosome-recycling factor"/>
    <property type="match status" value="1"/>
</dbReference>
<dbReference type="FunFam" id="3.30.1360.40:FF:000001">
    <property type="entry name" value="Ribosome-recycling factor"/>
    <property type="match status" value="1"/>
</dbReference>
<dbReference type="Gene3D" id="3.30.1360.40">
    <property type="match status" value="1"/>
</dbReference>
<dbReference type="Gene3D" id="1.10.132.20">
    <property type="entry name" value="Ribosome-recycling factor"/>
    <property type="match status" value="1"/>
</dbReference>
<dbReference type="HAMAP" id="MF_00040">
    <property type="entry name" value="RRF"/>
    <property type="match status" value="1"/>
</dbReference>
<dbReference type="InterPro" id="IPR002661">
    <property type="entry name" value="Ribosome_recyc_fac"/>
</dbReference>
<dbReference type="InterPro" id="IPR023584">
    <property type="entry name" value="Ribosome_recyc_fac_dom"/>
</dbReference>
<dbReference type="InterPro" id="IPR036191">
    <property type="entry name" value="RRF_sf"/>
</dbReference>
<dbReference type="NCBIfam" id="TIGR00496">
    <property type="entry name" value="frr"/>
    <property type="match status" value="1"/>
</dbReference>
<dbReference type="PANTHER" id="PTHR20982:SF3">
    <property type="entry name" value="MITOCHONDRIAL RIBOSOME RECYCLING FACTOR PSEUDO 1"/>
    <property type="match status" value="1"/>
</dbReference>
<dbReference type="PANTHER" id="PTHR20982">
    <property type="entry name" value="RIBOSOME RECYCLING FACTOR"/>
    <property type="match status" value="1"/>
</dbReference>
<dbReference type="Pfam" id="PF01765">
    <property type="entry name" value="RRF"/>
    <property type="match status" value="1"/>
</dbReference>
<dbReference type="SUPFAM" id="SSF55194">
    <property type="entry name" value="Ribosome recycling factor, RRF"/>
    <property type="match status" value="1"/>
</dbReference>
<evidence type="ECO:0000255" key="1">
    <source>
        <dbReference type="HAMAP-Rule" id="MF_00040"/>
    </source>
</evidence>
<protein>
    <recommendedName>
        <fullName evidence="1">Ribosome-recycling factor</fullName>
        <shortName evidence="1">RRF</shortName>
    </recommendedName>
    <alternativeName>
        <fullName evidence="1">Ribosome-releasing factor</fullName>
    </alternativeName>
</protein>
<keyword id="KW-0963">Cytoplasm</keyword>
<keyword id="KW-0648">Protein biosynthesis</keyword>
<name>RRF_CAMJR</name>
<reference key="1">
    <citation type="journal article" date="2005" name="PLoS Biol.">
        <title>Major structural differences and novel potential virulence mechanisms from the genomes of multiple Campylobacter species.</title>
        <authorList>
            <person name="Fouts D.E."/>
            <person name="Mongodin E.F."/>
            <person name="Mandrell R.E."/>
            <person name="Miller W.G."/>
            <person name="Rasko D.A."/>
            <person name="Ravel J."/>
            <person name="Brinkac L.M."/>
            <person name="DeBoy R.T."/>
            <person name="Parker C.T."/>
            <person name="Daugherty S.C."/>
            <person name="Dodson R.J."/>
            <person name="Durkin A.S."/>
            <person name="Madupu R."/>
            <person name="Sullivan S.A."/>
            <person name="Shetty J.U."/>
            <person name="Ayodeji M.A."/>
            <person name="Shvartsbeyn A."/>
            <person name="Schatz M.C."/>
            <person name="Badger J.H."/>
            <person name="Fraser C.M."/>
            <person name="Nelson K.E."/>
        </authorList>
    </citation>
    <scope>NUCLEOTIDE SEQUENCE [LARGE SCALE GENOMIC DNA]</scope>
    <source>
        <strain>RM1221</strain>
    </source>
</reference>
<proteinExistence type="inferred from homology"/>
<sequence>MLNEIFNKQKTQSEKSLEALKKDFTTLRTGKVNTHILDHITVDYYGTQTPLNQVATVLASDASTISITPWEKPLLKTIESAIAAANIGVNPNNDGESVKLFFPPMTREQREENVKQAKAMGEKAKVSIRNIRKDANDAVKKLEKDKAISEDEAKKAYDEVQKLTDTYTTKIDESVKNKESELLKV</sequence>
<accession>Q5HWM8</accession>
<comment type="function">
    <text evidence="1">Responsible for the release of ribosomes from messenger RNA at the termination of protein biosynthesis. May increase the efficiency of translation by recycling ribosomes from one round of translation to another.</text>
</comment>
<comment type="subcellular location">
    <subcellularLocation>
        <location evidence="1">Cytoplasm</location>
    </subcellularLocation>
</comment>
<comment type="similarity">
    <text evidence="1">Belongs to the RRF family.</text>
</comment>